<proteinExistence type="inferred from homology"/>
<accession>Q8PML8</accession>
<evidence type="ECO:0000255" key="1">
    <source>
        <dbReference type="HAMAP-Rule" id="MF_00392"/>
    </source>
</evidence>
<evidence type="ECO:0000305" key="2"/>
<organism>
    <name type="scientific">Xanthomonas axonopodis pv. citri (strain 306)</name>
    <dbReference type="NCBI Taxonomy" id="190486"/>
    <lineage>
        <taxon>Bacteria</taxon>
        <taxon>Pseudomonadati</taxon>
        <taxon>Pseudomonadota</taxon>
        <taxon>Gammaproteobacteria</taxon>
        <taxon>Lysobacterales</taxon>
        <taxon>Lysobacteraceae</taxon>
        <taxon>Xanthomonas</taxon>
    </lineage>
</organism>
<sequence length="439" mass="47486">MKGIGNRESGIVDGQRNGASVGSVTTALPIPDSPLPIPGARKRAPRIALIAGEASGDILGAGLIEQLRLRYPNAEFVGIGGDAMRGVGCQTWFDASELAVMGLTEVLRHLPRLLKLRSAFRERVLAWKPDVFIGIDAPDFNLPVERWLKQRGIKTVHYVSPSVWAWREKRAEKIGVSADLVLCLFPMEPPIYAKHGVDARFVGHPMADDIAYQSDRAAARATLGLSASSTVLAVLPGSRHGEISRLGDTFFQAAWLVSEHLPNLHVLVPAANPGCKQLLAEQLSRSSLPVMRSHLLDGQARTAMLAADVVLLASGTATLEAMLVKRPMVVGYKVAPLTYRIVKLLGLLKVNRYALPNILANDDLAPELMQDDCTPERLCVALLDWFKHPDKVAALQPRYLALHAELRRDASARAADAVAGLLSQRESGMENRESAGAGA</sequence>
<reference key="1">
    <citation type="journal article" date="2002" name="Nature">
        <title>Comparison of the genomes of two Xanthomonas pathogens with differing host specificities.</title>
        <authorList>
            <person name="da Silva A.C.R."/>
            <person name="Ferro J.A."/>
            <person name="Reinach F.C."/>
            <person name="Farah C.S."/>
            <person name="Furlan L.R."/>
            <person name="Quaggio R.B."/>
            <person name="Monteiro-Vitorello C.B."/>
            <person name="Van Sluys M.A."/>
            <person name="Almeida N.F. Jr."/>
            <person name="Alves L.M.C."/>
            <person name="do Amaral A.M."/>
            <person name="Bertolini M.C."/>
            <person name="Camargo L.E.A."/>
            <person name="Camarotte G."/>
            <person name="Cannavan F."/>
            <person name="Cardozo J."/>
            <person name="Chambergo F."/>
            <person name="Ciapina L.P."/>
            <person name="Cicarelli R.M.B."/>
            <person name="Coutinho L.L."/>
            <person name="Cursino-Santos J.R."/>
            <person name="El-Dorry H."/>
            <person name="Faria J.B."/>
            <person name="Ferreira A.J.S."/>
            <person name="Ferreira R.C.C."/>
            <person name="Ferro M.I.T."/>
            <person name="Formighieri E.F."/>
            <person name="Franco M.C."/>
            <person name="Greggio C.C."/>
            <person name="Gruber A."/>
            <person name="Katsuyama A.M."/>
            <person name="Kishi L.T."/>
            <person name="Leite R.P."/>
            <person name="Lemos E.G.M."/>
            <person name="Lemos M.V.F."/>
            <person name="Locali E.C."/>
            <person name="Machado M.A."/>
            <person name="Madeira A.M.B.N."/>
            <person name="Martinez-Rossi N.M."/>
            <person name="Martins E.C."/>
            <person name="Meidanis J."/>
            <person name="Menck C.F.M."/>
            <person name="Miyaki C.Y."/>
            <person name="Moon D.H."/>
            <person name="Moreira L.M."/>
            <person name="Novo M.T.M."/>
            <person name="Okura V.K."/>
            <person name="Oliveira M.C."/>
            <person name="Oliveira V.R."/>
            <person name="Pereira H.A."/>
            <person name="Rossi A."/>
            <person name="Sena J.A.D."/>
            <person name="Silva C."/>
            <person name="de Souza R.F."/>
            <person name="Spinola L.A.F."/>
            <person name="Takita M.A."/>
            <person name="Tamura R.E."/>
            <person name="Teixeira E.C."/>
            <person name="Tezza R.I.D."/>
            <person name="Trindade dos Santos M."/>
            <person name="Truffi D."/>
            <person name="Tsai S.M."/>
            <person name="White F.F."/>
            <person name="Setubal J.C."/>
            <person name="Kitajima J.P."/>
        </authorList>
    </citation>
    <scope>NUCLEOTIDE SEQUENCE [LARGE SCALE GENOMIC DNA]</scope>
    <source>
        <strain>306</strain>
    </source>
</reference>
<comment type="function">
    <text evidence="1">Condensation of UDP-2,3-diacylglucosamine and 2,3-diacylglucosamine-1-phosphate to form lipid A disaccharide, a precursor of lipid A, a phosphorylated glycolipid that anchors the lipopolysaccharide to the outer membrane of the cell.</text>
</comment>
<comment type="catalytic activity">
    <reaction evidence="1">
        <text>a lipid X + a UDP-2-N,3-O-bis[(3R)-3-hydroxyacyl]-alpha-D-glucosamine = a lipid A disaccharide + UDP + H(+)</text>
        <dbReference type="Rhea" id="RHEA:67828"/>
        <dbReference type="ChEBI" id="CHEBI:15378"/>
        <dbReference type="ChEBI" id="CHEBI:58223"/>
        <dbReference type="ChEBI" id="CHEBI:137748"/>
        <dbReference type="ChEBI" id="CHEBI:176338"/>
        <dbReference type="ChEBI" id="CHEBI:176343"/>
        <dbReference type="EC" id="2.4.1.182"/>
    </reaction>
</comment>
<comment type="pathway">
    <text evidence="1">Bacterial outer membrane biogenesis; LPS lipid A biosynthesis.</text>
</comment>
<comment type="similarity">
    <text evidence="1">Belongs to the LpxB family.</text>
</comment>
<comment type="sequence caution" evidence="2">
    <conflict type="erroneous initiation">
        <sequence resource="EMBL-CDS" id="AAM36279"/>
    </conflict>
</comment>
<protein>
    <recommendedName>
        <fullName evidence="1">Lipid-A-disaccharide synthase</fullName>
        <ecNumber evidence="1">2.4.1.182</ecNumber>
    </recommendedName>
</protein>
<dbReference type="EC" id="2.4.1.182" evidence="1"/>
<dbReference type="EMBL" id="AE008923">
    <property type="protein sequence ID" value="AAM36279.1"/>
    <property type="status" value="ALT_INIT"/>
    <property type="molecule type" value="Genomic_DNA"/>
</dbReference>
<dbReference type="SMR" id="Q8PML8"/>
<dbReference type="CAZy" id="GT19">
    <property type="family name" value="Glycosyltransferase Family 19"/>
</dbReference>
<dbReference type="KEGG" id="xac:XAC1408"/>
<dbReference type="eggNOG" id="COG0763">
    <property type="taxonomic scope" value="Bacteria"/>
</dbReference>
<dbReference type="HOGENOM" id="CLU_036577_3_0_6"/>
<dbReference type="UniPathway" id="UPA00973"/>
<dbReference type="Proteomes" id="UP000000576">
    <property type="component" value="Chromosome"/>
</dbReference>
<dbReference type="GO" id="GO:0016020">
    <property type="term" value="C:membrane"/>
    <property type="evidence" value="ECO:0007669"/>
    <property type="project" value="GOC"/>
</dbReference>
<dbReference type="GO" id="GO:0008915">
    <property type="term" value="F:lipid-A-disaccharide synthase activity"/>
    <property type="evidence" value="ECO:0007669"/>
    <property type="project" value="UniProtKB-UniRule"/>
</dbReference>
<dbReference type="GO" id="GO:0005543">
    <property type="term" value="F:phospholipid binding"/>
    <property type="evidence" value="ECO:0007669"/>
    <property type="project" value="TreeGrafter"/>
</dbReference>
<dbReference type="GO" id="GO:0009245">
    <property type="term" value="P:lipid A biosynthetic process"/>
    <property type="evidence" value="ECO:0007669"/>
    <property type="project" value="UniProtKB-UniRule"/>
</dbReference>
<dbReference type="CDD" id="cd01635">
    <property type="entry name" value="Glycosyltransferase_GTB-type"/>
    <property type="match status" value="1"/>
</dbReference>
<dbReference type="HAMAP" id="MF_00392">
    <property type="entry name" value="LpxB"/>
    <property type="match status" value="1"/>
</dbReference>
<dbReference type="InterPro" id="IPR003835">
    <property type="entry name" value="Glyco_trans_19"/>
</dbReference>
<dbReference type="NCBIfam" id="TIGR00215">
    <property type="entry name" value="lpxB"/>
    <property type="match status" value="1"/>
</dbReference>
<dbReference type="PANTHER" id="PTHR30372">
    <property type="entry name" value="LIPID-A-DISACCHARIDE SYNTHASE"/>
    <property type="match status" value="1"/>
</dbReference>
<dbReference type="PANTHER" id="PTHR30372:SF4">
    <property type="entry name" value="LIPID-A-DISACCHARIDE SYNTHASE, MITOCHONDRIAL-RELATED"/>
    <property type="match status" value="1"/>
</dbReference>
<dbReference type="Pfam" id="PF02684">
    <property type="entry name" value="LpxB"/>
    <property type="match status" value="1"/>
</dbReference>
<dbReference type="SUPFAM" id="SSF53756">
    <property type="entry name" value="UDP-Glycosyltransferase/glycogen phosphorylase"/>
    <property type="match status" value="1"/>
</dbReference>
<gene>
    <name evidence="1" type="primary">lpxB</name>
    <name type="ordered locus">XAC1408</name>
</gene>
<name>LPXB_XANAC</name>
<feature type="chain" id="PRO_0000190193" description="Lipid-A-disaccharide synthase">
    <location>
        <begin position="1"/>
        <end position="439"/>
    </location>
</feature>
<keyword id="KW-0328">Glycosyltransferase</keyword>
<keyword id="KW-0441">Lipid A biosynthesis</keyword>
<keyword id="KW-0444">Lipid biosynthesis</keyword>
<keyword id="KW-0443">Lipid metabolism</keyword>
<keyword id="KW-0808">Transferase</keyword>